<gene>
    <name evidence="1" type="primary">ycf4</name>
</gene>
<geneLocation type="chloroplast"/>
<feature type="chain" id="PRO_0000326014" description="Photosystem I assembly protein Ycf4">
    <location>
        <begin position="1"/>
        <end position="184"/>
    </location>
</feature>
<feature type="transmembrane region" description="Helical" evidence="1">
    <location>
        <begin position="22"/>
        <end position="42"/>
    </location>
</feature>
<feature type="transmembrane region" description="Helical" evidence="1">
    <location>
        <begin position="57"/>
        <end position="77"/>
    </location>
</feature>
<evidence type="ECO:0000255" key="1">
    <source>
        <dbReference type="HAMAP-Rule" id="MF_00437"/>
    </source>
</evidence>
<name>YCF4_LEPVR</name>
<comment type="function">
    <text evidence="1">Seems to be required for the assembly of the photosystem I complex.</text>
</comment>
<comment type="subcellular location">
    <subcellularLocation>
        <location evidence="1">Plastid</location>
        <location evidence="1">Chloroplast thylakoid membrane</location>
        <topology evidence="1">Multi-pass membrane protein</topology>
    </subcellularLocation>
</comment>
<comment type="similarity">
    <text evidence="1">Belongs to the Ycf4 family.</text>
</comment>
<keyword id="KW-0150">Chloroplast</keyword>
<keyword id="KW-0472">Membrane</keyword>
<keyword id="KW-0602">Photosynthesis</keyword>
<keyword id="KW-0934">Plastid</keyword>
<keyword id="KW-0793">Thylakoid</keyword>
<keyword id="KW-0812">Transmembrane</keyword>
<keyword id="KW-1133">Transmembrane helix</keyword>
<accession>A4QLB7</accession>
<reference key="1">
    <citation type="submission" date="2007-03" db="EMBL/GenBank/DDBJ databases">
        <title>Sequencing analysis of Lepidium virginicum JO26 chloroplast DNA.</title>
        <authorList>
            <person name="Hosouchi T."/>
            <person name="Tsuruoka H."/>
            <person name="Kotani H."/>
        </authorList>
    </citation>
    <scope>NUCLEOTIDE SEQUENCE [LARGE SCALE GENOMIC DNA]</scope>
</reference>
<dbReference type="EMBL" id="AP009374">
    <property type="protein sequence ID" value="BAF50472.1"/>
    <property type="molecule type" value="Genomic_DNA"/>
</dbReference>
<dbReference type="RefSeq" id="YP_001123648.1">
    <property type="nucleotide sequence ID" value="NC_009273.1"/>
</dbReference>
<dbReference type="GeneID" id="4961967"/>
<dbReference type="GO" id="GO:0009535">
    <property type="term" value="C:chloroplast thylakoid membrane"/>
    <property type="evidence" value="ECO:0007669"/>
    <property type="project" value="UniProtKB-SubCell"/>
</dbReference>
<dbReference type="GO" id="GO:0009522">
    <property type="term" value="C:photosystem I"/>
    <property type="evidence" value="ECO:0007669"/>
    <property type="project" value="InterPro"/>
</dbReference>
<dbReference type="GO" id="GO:0015979">
    <property type="term" value="P:photosynthesis"/>
    <property type="evidence" value="ECO:0007669"/>
    <property type="project" value="UniProtKB-UniRule"/>
</dbReference>
<dbReference type="HAMAP" id="MF_00437">
    <property type="entry name" value="Ycf4"/>
    <property type="match status" value="1"/>
</dbReference>
<dbReference type="InterPro" id="IPR003359">
    <property type="entry name" value="PSI_Ycf4_assembly"/>
</dbReference>
<dbReference type="PANTHER" id="PTHR33288">
    <property type="match status" value="1"/>
</dbReference>
<dbReference type="PANTHER" id="PTHR33288:SF4">
    <property type="entry name" value="PHOTOSYSTEM I ASSEMBLY PROTEIN YCF4"/>
    <property type="match status" value="1"/>
</dbReference>
<dbReference type="Pfam" id="PF02392">
    <property type="entry name" value="Ycf4"/>
    <property type="match status" value="1"/>
</dbReference>
<sequence>MSWRSESIWIEFITGSRKTSNFCWAFILFLGSLGFLLVGTSSYLGRNVISLFPSQQIIFFPQGIVMSFYGIAGLFISCYLWCTILWNVGSGYDLFDRKEGIVRIFRWGFPGKSRRIFLRFLMKDIQSIRIEVKEGVSARRVLYMEIRGQGAIPLIRTDENFTTREIEQKAAELAYFLRVPIEVF</sequence>
<protein>
    <recommendedName>
        <fullName evidence="1">Photosystem I assembly protein Ycf4</fullName>
    </recommendedName>
</protein>
<organism>
    <name type="scientific">Lepidium virginicum</name>
    <name type="common">Virginia pepperweed</name>
    <dbReference type="NCBI Taxonomy" id="59292"/>
    <lineage>
        <taxon>Eukaryota</taxon>
        <taxon>Viridiplantae</taxon>
        <taxon>Streptophyta</taxon>
        <taxon>Embryophyta</taxon>
        <taxon>Tracheophyta</taxon>
        <taxon>Spermatophyta</taxon>
        <taxon>Magnoliopsida</taxon>
        <taxon>eudicotyledons</taxon>
        <taxon>Gunneridae</taxon>
        <taxon>Pentapetalae</taxon>
        <taxon>rosids</taxon>
        <taxon>malvids</taxon>
        <taxon>Brassicales</taxon>
        <taxon>Brassicaceae</taxon>
        <taxon>Lepidieae</taxon>
        <taxon>Lepidium</taxon>
    </lineage>
</organism>
<proteinExistence type="inferred from homology"/>